<evidence type="ECO:0000255" key="1"/>
<evidence type="ECO:0000256" key="2">
    <source>
        <dbReference type="SAM" id="MobiDB-lite"/>
    </source>
</evidence>
<evidence type="ECO:0000269" key="3">
    <source>
    </source>
</evidence>
<evidence type="ECO:0000269" key="4">
    <source>
    </source>
</evidence>
<evidence type="ECO:0000269" key="5">
    <source>
    </source>
</evidence>
<evidence type="ECO:0000269" key="6">
    <source>
    </source>
</evidence>
<evidence type="ECO:0000305" key="7"/>
<evidence type="ECO:0000305" key="8">
    <source>
    </source>
</evidence>
<reference key="1">
    <citation type="journal article" date="1993" name="J. Mol. Biol.">
        <title>The gene clusters ARC and COR on chromosomes 5 and 10, respectively, of Saccharomyces cerevisiae share a common ancestry.</title>
        <authorList>
            <person name="Melnick L."/>
            <person name="Sherman F."/>
        </authorList>
    </citation>
    <scope>NUCLEOTIDE SEQUENCE [GENOMIC DNA]</scope>
    <source>
        <strain>B-6441</strain>
    </source>
</reference>
<reference key="2">
    <citation type="journal article" date="1997" name="Nature">
        <title>The nucleotide sequence of Saccharomyces cerevisiae chromosome V.</title>
        <authorList>
            <person name="Dietrich F.S."/>
            <person name="Mulligan J.T."/>
            <person name="Hennessy K.M."/>
            <person name="Yelton M.A."/>
            <person name="Allen E."/>
            <person name="Araujo R."/>
            <person name="Aviles E."/>
            <person name="Berno A."/>
            <person name="Brennan T."/>
            <person name="Carpenter J."/>
            <person name="Chen E."/>
            <person name="Cherry J.M."/>
            <person name="Chung E."/>
            <person name="Duncan M."/>
            <person name="Guzman E."/>
            <person name="Hartzell G."/>
            <person name="Hunicke-Smith S."/>
            <person name="Hyman R.W."/>
            <person name="Kayser A."/>
            <person name="Komp C."/>
            <person name="Lashkari D."/>
            <person name="Lew H."/>
            <person name="Lin D."/>
            <person name="Mosedale D."/>
            <person name="Nakahara K."/>
            <person name="Namath A."/>
            <person name="Norgren R."/>
            <person name="Oefner P."/>
            <person name="Oh C."/>
            <person name="Petel F.X."/>
            <person name="Roberts D."/>
            <person name="Sehl P."/>
            <person name="Schramm S."/>
            <person name="Shogren T."/>
            <person name="Smith V."/>
            <person name="Taylor P."/>
            <person name="Wei Y."/>
            <person name="Botstein D."/>
            <person name="Davis R.W."/>
        </authorList>
    </citation>
    <scope>NUCLEOTIDE SEQUENCE [LARGE SCALE GENOMIC DNA]</scope>
    <source>
        <strain>ATCC 204508 / S288c</strain>
    </source>
</reference>
<reference key="3">
    <citation type="journal article" date="2014" name="G3 (Bethesda)">
        <title>The reference genome sequence of Saccharomyces cerevisiae: Then and now.</title>
        <authorList>
            <person name="Engel S.R."/>
            <person name="Dietrich F.S."/>
            <person name="Fisk D.G."/>
            <person name="Binkley G."/>
            <person name="Balakrishnan R."/>
            <person name="Costanzo M.C."/>
            <person name="Dwight S.S."/>
            <person name="Hitz B.C."/>
            <person name="Karra K."/>
            <person name="Nash R.S."/>
            <person name="Weng S."/>
            <person name="Wong E.D."/>
            <person name="Lloyd P."/>
            <person name="Skrzypek M.S."/>
            <person name="Miyasato S.R."/>
            <person name="Simison M."/>
            <person name="Cherry J.M."/>
        </authorList>
    </citation>
    <scope>GENOME REANNOTATION</scope>
    <source>
        <strain>ATCC 204508 / S288c</strain>
    </source>
</reference>
<reference key="4">
    <citation type="journal article" date="1997" name="Biochem. Biophys. Res. Commun.">
        <title>Novel membrane protein complexes for protein glycosylation in the yeast Golgi apparatus.</title>
        <authorList>
            <person name="Hashimoto H."/>
            <person name="Yoda K."/>
        </authorList>
    </citation>
    <scope>PROTEIN SEQUENCE OF 1-10</scope>
    <scope>SUBCELLULAR LOCATION</scope>
    <scope>SUBUNIT</scope>
</reference>
<reference key="5">
    <citation type="journal article" date="2000" name="FEBS Lett.">
        <title>Proteins in the early Golgi compartment of Saccharomyces cerevisiae immunoisolated by Sed5p.</title>
        <authorList>
            <person name="Cho J.-H."/>
            <person name="Noda Y."/>
            <person name="Yoda K."/>
        </authorList>
    </citation>
    <scope>PROTEIN SEQUENCE OF 1-5</scope>
    <scope>SUBCELLULAR LOCATION</scope>
</reference>
<reference key="6">
    <citation type="journal article" date="1994" name="EMBO J.">
        <title>The functioning of the yeast Golgi apparatus requires an ER protein encoded by ANP1, a member of a new family of genes affecting the secretory pathway.</title>
        <authorList>
            <person name="Chapman R.E."/>
            <person name="Munro S."/>
        </authorList>
    </citation>
    <scope>CHARACTERIZATION</scope>
</reference>
<reference key="7">
    <citation type="journal article" date="1998" name="EMBO J.">
        <title>Multi-protein complexes in the cis Golgi of Saccharomyces cerevisiae with alpha-1,6-mannosyltransferase activity.</title>
        <authorList>
            <person name="Jungmann J."/>
            <person name="Munro S."/>
        </authorList>
    </citation>
    <scope>ACTIVITY OF M-POL II COMPLEX</scope>
    <scope>SUBUNIT</scope>
    <scope>SUBCELLULAR LOCATION</scope>
</reference>
<reference key="8">
    <citation type="journal article" date="2000" name="Proc. Natl. Acad. Sci. U.S.A.">
        <title>Active recycling of yeast Golgi mannosyltransferase complexes through the endoplasmic reticulum.</title>
        <authorList>
            <person name="Todorow Z."/>
            <person name="Spang A."/>
            <person name="Carmack E."/>
            <person name="Yates J."/>
            <person name="Schekman R."/>
        </authorList>
    </citation>
    <scope>SUBCELLULAR LOCATION</scope>
</reference>
<name>ANP1_YEAST</name>
<gene>
    <name type="primary">ANP1</name>
    <name type="synonym">GEM3</name>
    <name type="ordered locus">YEL036C</name>
    <name type="ORF">SYGP-ORF28</name>
</gene>
<feature type="chain" id="PRO_0000193668" description="Mannan polymerase II complex ANP1 subunit">
    <location>
        <begin position="1"/>
        <end position="500"/>
    </location>
</feature>
<feature type="topological domain" description="Cytoplasmic" evidence="1">
    <location>
        <begin position="1"/>
        <end position="15"/>
    </location>
</feature>
<feature type="transmembrane region" description="Helical; Signal-anchor for type II membrane protein">
    <location>
        <begin position="16"/>
        <end position="27"/>
    </location>
</feature>
<feature type="topological domain" description="Lumenal" evidence="1">
    <location>
        <begin position="28"/>
        <end position="500"/>
    </location>
</feature>
<feature type="region of interest" description="Disordered" evidence="2">
    <location>
        <begin position="424"/>
        <end position="500"/>
    </location>
</feature>
<feature type="compositionally biased region" description="Low complexity" evidence="2">
    <location>
        <begin position="446"/>
        <end position="467"/>
    </location>
</feature>
<feature type="compositionally biased region" description="Basic and acidic residues" evidence="2">
    <location>
        <begin position="489"/>
        <end position="500"/>
    </location>
</feature>
<feature type="sequence conflict" description="In Ref. 1; AAD13971/AAA34426." evidence="7" ref="1">
    <original>HHDKD</original>
    <variation>QSGQGN</variation>
    <location>
        <begin position="220"/>
        <end position="224"/>
    </location>
</feature>
<feature type="sequence conflict" description="In Ref. 1; AAD13971/AAA34426/AAB28440/AAA34937." evidence="7" ref="1">
    <original>F</original>
    <variation>L</variation>
    <location>
        <position position="313"/>
    </location>
</feature>
<feature type="sequence conflict" description="In Ref. 1; AAD13971/AAA34426." evidence="7" ref="1">
    <original>PQGKPLDDNDKNKKKHPKEVPLDFDPDRN</original>
    <variation>RRGNLLMTTTRTRKNILKKFH</variation>
    <location>
        <begin position="472"/>
        <end position="500"/>
    </location>
</feature>
<keyword id="KW-0903">Direct protein sequencing</keyword>
<keyword id="KW-0256">Endoplasmic reticulum</keyword>
<keyword id="KW-0333">Golgi apparatus</keyword>
<keyword id="KW-0472">Membrane</keyword>
<keyword id="KW-1185">Reference proteome</keyword>
<keyword id="KW-0735">Signal-anchor</keyword>
<keyword id="KW-0812">Transmembrane</keyword>
<keyword id="KW-1133">Transmembrane helix</keyword>
<sequence>MKYNNRKLSFNPTTVSIAGTLLTVFFLTRLVLSFFSISLFQLVTFQGIFKPYVPDFKNTPSVEFYDLRNYQGNKDGWQQGDRILFCVPLRDASEHLPMFFNHLNTMTYPHNLIDLSFLVSDSSDNTMGVLLSNLQMAQSQQDKSKRFGNIEIYEKDFGQIIGQSFSDRHGFGAQGPRRKLMARARNWLGSVALKPYHSWVYWRDVDVETIPTTIMEDLMHHDKDVIVPNVWRPLPDWLGNIQPYDLNSWKESEGGLQLADSLDEDAVIVEGYPEYATWRPHLAYMRDPNGNPEDEMELDGIGGVSILAKAKVFRTGSHFPAFSFEKHAETEAFGRLSRRMNYNVIGLPHYVIWHIYEPSSDDLKHMAWMAEEEKRKLEEERIREFYNKIWEIGFEDVRDQWNEERDSILKNIDSTLNNKVTVDWSEEGDGSELVDSKGDFVSPNNQQQQQQQQQQQQQQQQQQQQQQLDGNPQGKPLDDNDKNKKKHPKEVPLDFDPDRN</sequence>
<comment type="function">
    <text>Involved in the organization of the secretory pathway. Required to maintain a functional Golgi apparatus.</text>
</comment>
<comment type="function">
    <text>The M-Pol II complex possesses alpha-1,6-mannosyltransferase activity and is probably involved in the elongation of the mannan backbone of N-linked glycans on cell wall and periplasmic proteins.</text>
</comment>
<comment type="subunit">
    <text evidence="5 6">Component of the M-Pol II complex composed of ANP1, MNN9, MNN10, MNN11 and HOC1.</text>
</comment>
<comment type="interaction">
    <interactant intactId="EBI-2595">
        <id>P32629</id>
    </interactant>
    <interactant intactId="EBI-8430">
        <id>P47124</id>
        <label>HOC1</label>
    </interactant>
    <organismsDiffer>false</organismsDiffer>
    <experiments>3</experiments>
</comment>
<comment type="interaction">
    <interactant intactId="EBI-2595">
        <id>P32629</id>
    </interactant>
    <interactant intactId="EBI-11043">
        <id>P50108</id>
        <label>MNN10</label>
    </interactant>
    <organismsDiffer>false</organismsDiffer>
    <experiments>4</experiments>
</comment>
<comment type="interaction">
    <interactant intactId="EBI-2595">
        <id>P32629</id>
    </interactant>
    <interactant intactId="EBI-11052">
        <id>P46985</id>
        <label>MNN11</label>
    </interactant>
    <organismsDiffer>false</organismsDiffer>
    <experiments>4</experiments>
</comment>
<comment type="interaction">
    <interactant intactId="EBI-2595">
        <id>P32629</id>
    </interactant>
    <interactant intactId="EBI-11082">
        <id>P39107</id>
        <label>MNN9</label>
    </interactant>
    <organismsDiffer>false</organismsDiffer>
    <experiments>7</experiments>
</comment>
<comment type="subcellular location">
    <subcellularLocation>
        <location evidence="4">Endoplasmic reticulum membrane</location>
        <topology evidence="8">Single-pass type II membrane protein</topology>
    </subcellularLocation>
    <subcellularLocation>
        <location evidence="3 5 6">Golgi apparatus membrane</location>
        <topology evidence="8">Single-pass type II membrane protein</topology>
    </subcellularLocation>
    <text evidence="4 5">Cis-Golgi (PubMed:9430634). Recycles between endoplasmic reticulum and Golgi (PubMed:11095735).</text>
</comment>
<comment type="similarity">
    <text evidence="7">Belongs to the ANP1/MMN9/VAN1 family.</text>
</comment>
<accession>P32629</accession>
<accession>D3DLL3</accession>
<protein>
    <recommendedName>
        <fullName>Mannan polymerase II complex ANP1 subunit</fullName>
        <shortName>M-Pol II subunit ANP1</shortName>
    </recommendedName>
    <alternativeName>
        <fullName>Aminonitrophenyl propanediol resistance protein</fullName>
    </alternativeName>
</protein>
<dbReference type="EMBL" id="S65964">
    <property type="protein sequence ID" value="AAD13971.1"/>
    <property type="molecule type" value="Genomic_DNA"/>
</dbReference>
<dbReference type="EMBL" id="L22171">
    <property type="protein sequence ID" value="AAA34426.1"/>
    <property type="molecule type" value="Genomic_DNA"/>
</dbReference>
<dbReference type="EMBL" id="S66114">
    <property type="protein sequence ID" value="AAB28440.1"/>
    <property type="molecule type" value="mRNA"/>
</dbReference>
<dbReference type="EMBL" id="L22173">
    <property type="protein sequence ID" value="AAA34937.1"/>
    <property type="molecule type" value="Genomic_DNA"/>
</dbReference>
<dbReference type="EMBL" id="U18779">
    <property type="protein sequence ID" value="AAB65006.1"/>
    <property type="molecule type" value="Genomic_DNA"/>
</dbReference>
<dbReference type="EMBL" id="BK006939">
    <property type="protein sequence ID" value="DAA07617.1"/>
    <property type="molecule type" value="Genomic_DNA"/>
</dbReference>
<dbReference type="PIR" id="S50508">
    <property type="entry name" value="S50508"/>
</dbReference>
<dbReference type="RefSeq" id="NP_010878.1">
    <property type="nucleotide sequence ID" value="NM_001178851.1"/>
</dbReference>
<dbReference type="SMR" id="P32629"/>
<dbReference type="BioGRID" id="36693">
    <property type="interactions" value="689"/>
</dbReference>
<dbReference type="ComplexPortal" id="CPX-1839">
    <property type="entry name" value="alpha-1,6-mannosyltransferase complex, M-Pol II variant"/>
</dbReference>
<dbReference type="DIP" id="DIP-845N"/>
<dbReference type="FunCoup" id="P32629">
    <property type="interactions" value="249"/>
</dbReference>
<dbReference type="IntAct" id="P32629">
    <property type="interactions" value="44"/>
</dbReference>
<dbReference type="MINT" id="P32629"/>
<dbReference type="STRING" id="4932.YEL036C"/>
<dbReference type="CAZy" id="GT62">
    <property type="family name" value="Glycosyltransferase Family 62"/>
</dbReference>
<dbReference type="PaxDb" id="4932-YEL036C"/>
<dbReference type="PeptideAtlas" id="P32629"/>
<dbReference type="EnsemblFungi" id="YEL036C_mRNA">
    <property type="protein sequence ID" value="YEL036C"/>
    <property type="gene ID" value="YEL036C"/>
</dbReference>
<dbReference type="GeneID" id="856675"/>
<dbReference type="KEGG" id="sce:YEL036C"/>
<dbReference type="AGR" id="SGD:S000000762"/>
<dbReference type="SGD" id="S000000762">
    <property type="gene designation" value="ANP1"/>
</dbReference>
<dbReference type="VEuPathDB" id="FungiDB:YEL036C"/>
<dbReference type="eggNOG" id="ENOG502QVDT">
    <property type="taxonomic scope" value="Eukaryota"/>
</dbReference>
<dbReference type="GeneTree" id="ENSGT00940000176370"/>
<dbReference type="HOGENOM" id="CLU_017872_0_0_1"/>
<dbReference type="InParanoid" id="P32629"/>
<dbReference type="OMA" id="EHLPMFF"/>
<dbReference type="OrthoDB" id="204164at2759"/>
<dbReference type="BioCyc" id="MetaCyc:YEL036C-MONOMER"/>
<dbReference type="BioCyc" id="YEAST:YEL036C-MONOMER"/>
<dbReference type="BioGRID-ORCS" id="856675">
    <property type="hits" value="5 hits in 10 CRISPR screens"/>
</dbReference>
<dbReference type="PRO" id="PR:P32629"/>
<dbReference type="Proteomes" id="UP000002311">
    <property type="component" value="Chromosome V"/>
</dbReference>
<dbReference type="RNAct" id="P32629">
    <property type="molecule type" value="protein"/>
</dbReference>
<dbReference type="GO" id="GO:0005789">
    <property type="term" value="C:endoplasmic reticulum membrane"/>
    <property type="evidence" value="ECO:0007669"/>
    <property type="project" value="UniProtKB-SubCell"/>
</dbReference>
<dbReference type="GO" id="GO:0000137">
    <property type="term" value="C:Golgi cis cisterna"/>
    <property type="evidence" value="ECO:0000314"/>
    <property type="project" value="SGD"/>
</dbReference>
<dbReference type="GO" id="GO:0000136">
    <property type="term" value="C:mannan polymerase complex"/>
    <property type="evidence" value="ECO:0000314"/>
    <property type="project" value="SGD"/>
</dbReference>
<dbReference type="GO" id="GO:0000009">
    <property type="term" value="F:alpha-1,6-mannosyltransferase activity"/>
    <property type="evidence" value="ECO:0000314"/>
    <property type="project" value="UniProtKB"/>
</dbReference>
<dbReference type="GO" id="GO:0000032">
    <property type="term" value="P:cell wall mannoprotein biosynthetic process"/>
    <property type="evidence" value="ECO:0000318"/>
    <property type="project" value="GO_Central"/>
</dbReference>
<dbReference type="GO" id="GO:0006487">
    <property type="term" value="P:protein N-linked glycosylation"/>
    <property type="evidence" value="ECO:0000314"/>
    <property type="project" value="SGD"/>
</dbReference>
<dbReference type="FunFam" id="3.90.550.10:FF:000017">
    <property type="entry name" value="Mannan polymerase II complex ANP1 subunit"/>
    <property type="match status" value="1"/>
</dbReference>
<dbReference type="Gene3D" id="3.90.550.10">
    <property type="entry name" value="Spore Coat Polysaccharide Biosynthesis Protein SpsA, Chain A"/>
    <property type="match status" value="1"/>
</dbReference>
<dbReference type="InterPro" id="IPR052086">
    <property type="entry name" value="Mannan_Polymerase_Subunit"/>
</dbReference>
<dbReference type="InterPro" id="IPR029044">
    <property type="entry name" value="Nucleotide-diphossugar_trans"/>
</dbReference>
<dbReference type="PANTHER" id="PTHR43083">
    <property type="entry name" value="MANNAN POLYMERASE II"/>
    <property type="match status" value="1"/>
</dbReference>
<dbReference type="PANTHER" id="PTHR43083:SF2">
    <property type="entry name" value="MANNAN POLYMERASE II COMPLEX ANP1 SUBUNIT"/>
    <property type="match status" value="1"/>
</dbReference>
<dbReference type="Pfam" id="PF03452">
    <property type="entry name" value="Anp1"/>
    <property type="match status" value="1"/>
</dbReference>
<dbReference type="SUPFAM" id="SSF53448">
    <property type="entry name" value="Nucleotide-diphospho-sugar transferases"/>
    <property type="match status" value="1"/>
</dbReference>
<organism>
    <name type="scientific">Saccharomyces cerevisiae (strain ATCC 204508 / S288c)</name>
    <name type="common">Baker's yeast</name>
    <dbReference type="NCBI Taxonomy" id="559292"/>
    <lineage>
        <taxon>Eukaryota</taxon>
        <taxon>Fungi</taxon>
        <taxon>Dikarya</taxon>
        <taxon>Ascomycota</taxon>
        <taxon>Saccharomycotina</taxon>
        <taxon>Saccharomycetes</taxon>
        <taxon>Saccharomycetales</taxon>
        <taxon>Saccharomycetaceae</taxon>
        <taxon>Saccharomyces</taxon>
    </lineage>
</organism>
<proteinExistence type="evidence at protein level"/>